<dbReference type="EC" id="4.6.1.-" evidence="4"/>
<dbReference type="EMBL" id="AY559844">
    <property type="protein sequence ID" value="AAT66073.1"/>
    <property type="molecule type" value="mRNA"/>
</dbReference>
<dbReference type="SMR" id="Q5YD77"/>
<dbReference type="ArachnoServer" id="AS000519">
    <property type="toxin name" value="Sphingomyelinase D (LbSicTox-alphaIB1a)"/>
</dbReference>
<dbReference type="GO" id="GO:0005576">
    <property type="term" value="C:extracellular region"/>
    <property type="evidence" value="ECO:0007669"/>
    <property type="project" value="UniProtKB-SubCell"/>
</dbReference>
<dbReference type="GO" id="GO:0016829">
    <property type="term" value="F:lyase activity"/>
    <property type="evidence" value="ECO:0007669"/>
    <property type="project" value="UniProtKB-KW"/>
</dbReference>
<dbReference type="GO" id="GO:0046872">
    <property type="term" value="F:metal ion binding"/>
    <property type="evidence" value="ECO:0007669"/>
    <property type="project" value="UniProtKB-KW"/>
</dbReference>
<dbReference type="GO" id="GO:0008081">
    <property type="term" value="F:phosphoric diester hydrolase activity"/>
    <property type="evidence" value="ECO:0007669"/>
    <property type="project" value="InterPro"/>
</dbReference>
<dbReference type="GO" id="GO:0090729">
    <property type="term" value="F:toxin activity"/>
    <property type="evidence" value="ECO:0007669"/>
    <property type="project" value="UniProtKB-KW"/>
</dbReference>
<dbReference type="GO" id="GO:0031640">
    <property type="term" value="P:killing of cells of another organism"/>
    <property type="evidence" value="ECO:0007669"/>
    <property type="project" value="UniProtKB-KW"/>
</dbReference>
<dbReference type="GO" id="GO:0016042">
    <property type="term" value="P:lipid catabolic process"/>
    <property type="evidence" value="ECO:0007669"/>
    <property type="project" value="UniProtKB-KW"/>
</dbReference>
<dbReference type="CDD" id="cd08576">
    <property type="entry name" value="GDPD_like_SMaseD_PLD"/>
    <property type="match status" value="1"/>
</dbReference>
<dbReference type="Gene3D" id="3.20.20.190">
    <property type="entry name" value="Phosphatidylinositol (PI) phosphodiesterase"/>
    <property type="match status" value="1"/>
</dbReference>
<dbReference type="InterPro" id="IPR017946">
    <property type="entry name" value="PLC-like_Pdiesterase_TIM-brl"/>
</dbReference>
<dbReference type="Pfam" id="PF13653">
    <property type="entry name" value="GDPD_2"/>
    <property type="match status" value="1"/>
</dbReference>
<dbReference type="SUPFAM" id="SSF51695">
    <property type="entry name" value="PLC-like phosphodiesterases"/>
    <property type="match status" value="1"/>
</dbReference>
<name>A1KA_LOXBO</name>
<accession>Q5YD77</accession>
<feature type="chain" id="PRO_0000279554" description="Dermonecrotic toxin LbSicTox-alphaIB1a">
    <location>
        <begin position="1"/>
        <end position="279"/>
    </location>
</feature>
<feature type="active site" evidence="5">
    <location>
        <position position="11"/>
    </location>
</feature>
<feature type="active site" description="Nucleophile" evidence="5">
    <location>
        <position position="47"/>
    </location>
</feature>
<feature type="binding site" evidence="5">
    <location>
        <position position="31"/>
    </location>
    <ligand>
        <name>Mg(2+)</name>
        <dbReference type="ChEBI" id="CHEBI:18420"/>
    </ligand>
</feature>
<feature type="binding site" evidence="5">
    <location>
        <position position="33"/>
    </location>
    <ligand>
        <name>Mg(2+)</name>
        <dbReference type="ChEBI" id="CHEBI:18420"/>
    </ligand>
</feature>
<feature type="binding site" evidence="5">
    <location>
        <position position="91"/>
    </location>
    <ligand>
        <name>Mg(2+)</name>
        <dbReference type="ChEBI" id="CHEBI:18420"/>
    </ligand>
</feature>
<feature type="disulfide bond" evidence="3">
    <location>
        <begin position="51"/>
        <end position="57"/>
    </location>
</feature>
<feature type="disulfide bond" evidence="3">
    <location>
        <begin position="53"/>
        <end position="196"/>
    </location>
</feature>
<feature type="sequence conflict" description="In Ref. 1; AA sequence." evidence="9" ref="1">
    <original>A</original>
    <variation>V</variation>
    <location>
        <position position="6"/>
    </location>
</feature>
<keyword id="KW-0204">Cytolysis</keyword>
<keyword id="KW-1061">Dermonecrotic toxin</keyword>
<keyword id="KW-0903">Direct protein sequencing</keyword>
<keyword id="KW-1015">Disulfide bond</keyword>
<keyword id="KW-0354">Hemolysis</keyword>
<keyword id="KW-0442">Lipid degradation</keyword>
<keyword id="KW-0443">Lipid metabolism</keyword>
<keyword id="KW-0456">Lyase</keyword>
<keyword id="KW-0460">Magnesium</keyword>
<keyword id="KW-0479">Metal-binding</keyword>
<keyword id="KW-0964">Secreted</keyword>
<keyword id="KW-0800">Toxin</keyword>
<comment type="function">
    <text evidence="1 3 6 7">Dermonecrotic toxins cleave the phosphodiester linkage between the phosphate and headgroup of certain phospholipids (sphingolipid and lysolipid substrates), forming an alcohol (often choline) and a cyclic phosphate (By similarity). This toxin acts on sphingomyelin (SM) with high activity (about 30.5-31.5 U/mg) (PubMed:15450925, PubMed:16759681). It may also act on ceramide phosphoethanolamine (CPE), lysophosphatidylcholine (LPC) and lysophosphatidylethanolamine (LPE), but not on lysophosphatidylserine (LPS), and lysophosphatidylglycerol (LPG) (By similarity). It acts by transphosphatidylation, releasing exclusively cyclic phosphate products as second products (By similarity). Induces dermonecrosis, hemolysis, increased vascular permeability, edema, inflammatory response, and platelet aggregation (By similarity). Is lethal to mice (PubMed:16759681).</text>
</comment>
<comment type="catalytic activity">
    <reaction evidence="10 11">
        <text>an N-(acyl)-sphingosylphosphocholine = an N-(acyl)-sphingosyl-1,3-cyclic phosphate + choline</text>
        <dbReference type="Rhea" id="RHEA:60652"/>
        <dbReference type="ChEBI" id="CHEBI:15354"/>
        <dbReference type="ChEBI" id="CHEBI:64583"/>
        <dbReference type="ChEBI" id="CHEBI:143892"/>
    </reaction>
</comment>
<comment type="catalytic activity">
    <reaction evidence="1">
        <text>an N-(acyl)-sphingosylphosphoethanolamine = an N-(acyl)-sphingosyl-1,3-cyclic phosphate + ethanolamine</text>
        <dbReference type="Rhea" id="RHEA:60648"/>
        <dbReference type="ChEBI" id="CHEBI:57603"/>
        <dbReference type="ChEBI" id="CHEBI:143891"/>
        <dbReference type="ChEBI" id="CHEBI:143892"/>
    </reaction>
</comment>
<comment type="catalytic activity">
    <reaction evidence="1">
        <text>a 1-acyl-sn-glycero-3-phosphocholine = a 1-acyl-sn-glycero-2,3-cyclic phosphate + choline</text>
        <dbReference type="Rhea" id="RHEA:60700"/>
        <dbReference type="ChEBI" id="CHEBI:15354"/>
        <dbReference type="ChEBI" id="CHEBI:58168"/>
        <dbReference type="ChEBI" id="CHEBI:143947"/>
    </reaction>
</comment>
<comment type="catalytic activity">
    <reaction evidence="1">
        <text>a 1-acyl-sn-glycero-3-phosphoethanolamine = a 1-acyl-sn-glycero-2,3-cyclic phosphate + ethanolamine</text>
        <dbReference type="Rhea" id="RHEA:60704"/>
        <dbReference type="ChEBI" id="CHEBI:57603"/>
        <dbReference type="ChEBI" id="CHEBI:64381"/>
        <dbReference type="ChEBI" id="CHEBI:143947"/>
    </reaction>
</comment>
<comment type="cofactor">
    <cofactor evidence="5">
        <name>Mg(2+)</name>
        <dbReference type="ChEBI" id="CHEBI:18420"/>
    </cofactor>
    <text evidence="5">Binds 1 Mg(2+) ion per subunit.</text>
</comment>
<comment type="subcellular location">
    <subcellularLocation>
        <location evidence="6">Secreted</location>
    </subcellularLocation>
</comment>
<comment type="tissue specificity">
    <text evidence="10">Expressed by the venom gland.</text>
</comment>
<comment type="toxic dose">
    <text evidence="7">LD(50) is 200-250 ug/kg by intraperitoneal injection into mice.</text>
</comment>
<comment type="similarity">
    <text evidence="9">Belongs to the arthropod phospholipase D family. Class II subfamily. Class IIa sub-subfamily.</text>
</comment>
<comment type="caution">
    <text evidence="1 2 4">The most common activity assay for dermonecrotic toxins detects enzymatic activity by monitoring choline release from substrate. Liberation of choline from sphingomyelin (SM) or lysophosphatidylcholine (LPC) is commonly assumed to result from substrate hydrolysis, giving either ceramide-1-phosphate (C1P) or lysophosphatidic acid (LPA), respectively, as a second product. However, two studies from Lajoie and colleagues (2013 and 2015) report the observation of exclusive formation of cyclic phosphate products as second products, resulting from intramolecular transphosphatidylation. Cyclic phosphates have vastly different biological properties from their monoester counterparts, and they may be relevant to the pathology of brown spider envenomation.</text>
</comment>
<protein>
    <recommendedName>
        <fullName>Dermonecrotic toxin LbSicTox-alphaIB1a</fullName>
        <ecNumber evidence="4">4.6.1.-</ecNumber>
    </recommendedName>
    <alternativeName>
        <fullName evidence="8">Lb1</fullName>
    </alternativeName>
    <alternativeName>
        <fullName>Phospholipase D</fullName>
        <shortName>PLD</shortName>
    </alternativeName>
    <alternativeName>
        <fullName>Sphingomyelin phosphodiesterase D 1</fullName>
        <shortName>SMD 1</shortName>
        <shortName>SMase D 1</shortName>
        <shortName>Sphingomyelinase D 1</shortName>
    </alternativeName>
</protein>
<reference key="1">
    <citation type="journal article" date="2004" name="Toxicon">
        <title>Genetic and enzymatic characterization of sphingomyelinase D isoforms from the North American fiddleback spiders Loxosceles boneti and Loxosceles reclusa.</title>
        <authorList>
            <person name="Ramos-Cerrillo B."/>
            <person name="Olvera A."/>
            <person name="Odell G.V."/>
            <person name="Zamudio F."/>
            <person name="Paniagua-Solis J."/>
            <person name="Alagon A."/>
            <person name="Stock R.P."/>
        </authorList>
    </citation>
    <scope>NUCLEOTIDE SEQUENCE [MRNA]</scope>
    <scope>PROTEIN SEQUENCE OF 1-35</scope>
    <scope>FUNCTION</scope>
    <scope>SUBCELLULAR LOCATION</scope>
    <scope>CATALYTIC ACTIVITY</scope>
    <source>
        <tissue>Venom</tissue>
        <tissue>Venom gland</tissue>
    </source>
</reference>
<reference key="2">
    <citation type="journal article" date="2006" name="Toxicon">
        <title>North and south american Loxosceles spiders: development of a polyvalent antivenom with recombinant sphingomyelinases D as antigens.</title>
        <authorList>
            <person name="Olvera A."/>
            <person name="Ramos-Cerrillo B."/>
            <person name="Estevez J."/>
            <person name="Clement H."/>
            <person name="de Roodt A."/>
            <person name="Paniagua-Solis J."/>
            <person name="Vazquez H."/>
            <person name="Zavaleta A."/>
            <person name="Arruz M.S."/>
            <person name="Stock R.P."/>
            <person name="Alagon A."/>
        </authorList>
    </citation>
    <scope>FUNCTION</scope>
    <scope>TOXIC DOSE</scope>
    <scope>CATALYTIC ACTIVITY</scope>
</reference>
<evidence type="ECO:0000250" key="1">
    <source>
        <dbReference type="UniProtKB" id="A0A0D4WTV1"/>
    </source>
</evidence>
<evidence type="ECO:0000250" key="2">
    <source>
        <dbReference type="UniProtKB" id="A0A0D4WV12"/>
    </source>
</evidence>
<evidence type="ECO:0000250" key="3">
    <source>
        <dbReference type="UniProtKB" id="P0CE80"/>
    </source>
</evidence>
<evidence type="ECO:0000250" key="4">
    <source>
        <dbReference type="UniProtKB" id="Q4ZFU2"/>
    </source>
</evidence>
<evidence type="ECO:0000250" key="5">
    <source>
        <dbReference type="UniProtKB" id="Q8I914"/>
    </source>
</evidence>
<evidence type="ECO:0000269" key="6">
    <source>
    </source>
</evidence>
<evidence type="ECO:0000269" key="7">
    <source>
    </source>
</evidence>
<evidence type="ECO:0000303" key="8">
    <source>
    </source>
</evidence>
<evidence type="ECO:0000305" key="9"/>
<evidence type="ECO:0000305" key="10">
    <source>
    </source>
</evidence>
<evidence type="ECO:0000305" key="11">
    <source>
    </source>
</evidence>
<organism>
    <name type="scientific">Loxosceles boneti</name>
    <name type="common">North American fiddleback spider</name>
    <dbReference type="NCBI Taxonomy" id="283164"/>
    <lineage>
        <taxon>Eukaryota</taxon>
        <taxon>Metazoa</taxon>
        <taxon>Ecdysozoa</taxon>
        <taxon>Arthropoda</taxon>
        <taxon>Chelicerata</taxon>
        <taxon>Arachnida</taxon>
        <taxon>Araneae</taxon>
        <taxon>Araneomorphae</taxon>
        <taxon>Haplogynae</taxon>
        <taxon>Scytodoidea</taxon>
        <taxon>Sicariidae</taxon>
        <taxon>Loxosceles</taxon>
    </lineage>
</organism>
<proteinExistence type="evidence at protein level"/>
<sequence>ANKRPAWIMGHMVNAIAQIDEFVNLGANSIETDVSFDSSANPEYTYHGIPCDCGRTCTKWENFNDFLVGLRKATTPDDSNYHEKLILVVFDLKTGSLYDNQAYDAGKKLAKSILQHYWNNGNNGGRAYIVLSIPNLAHYKLITGFKETLTSDGHPELMDKIGYDFSGNDAIGDVASAYQKAGVTGHVWQSDGITNCLLRGLSRVREAVANRDSSNGYINKVYYWTVDKRASTRDALDAGVDGIMTNYPDVIADVLSESAYSAKFRIATYDDNPWETFKN</sequence>